<sequence>MREAVIAEVSTQLSEVVGVIERHLEPTLLAVHLYGSAVDGGLKPHSDIDLLVTVTVRLDETTRRALINDLLETSASPGESEILRAVEVTIVVHDDIIPWRYPAKRELQFGEWQRNDILAGIFEPATIDIDLAILLTKAREHSVALVGPAAEELFDPVPEQDLFEALNETLTLWNSPPDWAGDERNVVLTLSRIWYSAVTGKIAPKDVAADWAMERLPAQYQPVILEARQAYLGQEDRLASRADQLEEFVHYVKGEITKVVGK</sequence>
<dbReference type="EC" id="2.7.7.47" evidence="1"/>
<dbReference type="EMBL" id="X03886">
    <property type="protein sequence ID" value="CAA27523.1"/>
    <property type="molecule type" value="Genomic_DNA"/>
</dbReference>
<dbReference type="SMR" id="P0AG06"/>
<dbReference type="OMA" id="SAIWIND"/>
<dbReference type="GO" id="GO:0070566">
    <property type="term" value="F:adenylyltransferase activity"/>
    <property type="evidence" value="ECO:0007669"/>
    <property type="project" value="InterPro"/>
</dbReference>
<dbReference type="GO" id="GO:0009012">
    <property type="term" value="F:aminoglycoside 3''-adenylyltransferase activity"/>
    <property type="evidence" value="ECO:0007669"/>
    <property type="project" value="UniProtKB-EC"/>
</dbReference>
<dbReference type="GO" id="GO:0005524">
    <property type="term" value="F:ATP binding"/>
    <property type="evidence" value="ECO:0007669"/>
    <property type="project" value="UniProtKB-KW"/>
</dbReference>
<dbReference type="GO" id="GO:0046677">
    <property type="term" value="P:response to antibiotic"/>
    <property type="evidence" value="ECO:0007669"/>
    <property type="project" value="UniProtKB-KW"/>
</dbReference>
<dbReference type="CDD" id="cd05403">
    <property type="entry name" value="NT_KNTase_like"/>
    <property type="match status" value="1"/>
</dbReference>
<dbReference type="Gene3D" id="3.30.460.10">
    <property type="entry name" value="Beta Polymerase, domain 2"/>
    <property type="match status" value="1"/>
</dbReference>
<dbReference type="InterPro" id="IPR024172">
    <property type="entry name" value="AadA/Aad9"/>
</dbReference>
<dbReference type="InterPro" id="IPR025184">
    <property type="entry name" value="AadA_C"/>
</dbReference>
<dbReference type="InterPro" id="IPR043519">
    <property type="entry name" value="NT_sf"/>
</dbReference>
<dbReference type="InterPro" id="IPR002934">
    <property type="entry name" value="Polymerase_NTP_transf_dom"/>
</dbReference>
<dbReference type="NCBIfam" id="NF033126">
    <property type="entry name" value="ANT_3pp_AadA1"/>
    <property type="match status" value="1"/>
</dbReference>
<dbReference type="NCBIfam" id="NF012157">
    <property type="entry name" value="ANT_3pp_I"/>
    <property type="match status" value="1"/>
</dbReference>
<dbReference type="NCBIfam" id="NF010309">
    <property type="entry name" value="PRK13746.1"/>
    <property type="match status" value="1"/>
</dbReference>
<dbReference type="Pfam" id="PF13427">
    <property type="entry name" value="AadA_C"/>
    <property type="match status" value="1"/>
</dbReference>
<dbReference type="Pfam" id="PF01909">
    <property type="entry name" value="NTP_transf_2"/>
    <property type="match status" value="1"/>
</dbReference>
<dbReference type="PIRSF" id="PIRSF000819">
    <property type="entry name" value="Streptomycin_3-adenylyltransf"/>
    <property type="match status" value="1"/>
</dbReference>
<dbReference type="SUPFAM" id="SSF81301">
    <property type="entry name" value="Nucleotidyltransferase"/>
    <property type="match status" value="1"/>
</dbReference>
<protein>
    <recommendedName>
        <fullName>Aminoglycoside (3'') (9) adenylyltransferase</fullName>
        <ecNumber evidence="1">2.7.7.47</ecNumber>
    </recommendedName>
    <alternativeName>
        <fullName>Streptomycin 3''-adenylyltransferase</fullName>
    </alternativeName>
</protein>
<feature type="chain" id="PRO_0000068580" description="Aminoglycoside (3'') (9) adenylyltransferase">
    <location>
        <begin position="1"/>
        <end position="262"/>
    </location>
</feature>
<gene>
    <name evidence="2" type="primary">aadA</name>
</gene>
<evidence type="ECO:0000269" key="1">
    <source>
    </source>
</evidence>
<evidence type="ECO:0000303" key="2">
    <source>
    </source>
</evidence>
<evidence type="ECO:0000305" key="3">
    <source>
    </source>
</evidence>
<accession>P0AG06</accession>
<accession>P04826</accession>
<organism>
    <name type="scientific">Shigella flexneri</name>
    <dbReference type="NCBI Taxonomy" id="623"/>
    <lineage>
        <taxon>Bacteria</taxon>
        <taxon>Pseudomonadati</taxon>
        <taxon>Pseudomonadota</taxon>
        <taxon>Gammaproteobacteria</taxon>
        <taxon>Enterobacterales</taxon>
        <taxon>Enterobacteriaceae</taxon>
        <taxon>Shigella</taxon>
    </lineage>
</organism>
<geneLocation type="plasmid">
    <name>pCN1</name>
</geneLocation>
<name>S3AD_SHIFL</name>
<comment type="function">
    <text evidence="1">Mediates bacterial resistance to the antibiotics streptomycin and spectinomycin.</text>
</comment>
<comment type="catalytic activity">
    <reaction evidence="1">
        <text>streptomycin + ATP = 3''-O-adenylylstreptomycin + diphosphate</text>
        <dbReference type="Rhea" id="RHEA:20245"/>
        <dbReference type="ChEBI" id="CHEBI:30616"/>
        <dbReference type="ChEBI" id="CHEBI:33019"/>
        <dbReference type="ChEBI" id="CHEBI:58007"/>
        <dbReference type="ChEBI" id="CHEBI:58605"/>
        <dbReference type="EC" id="2.7.7.47"/>
    </reaction>
</comment>
<comment type="catalytic activity">
    <reaction evidence="3">
        <text>spectinomycin + ATP = 9-O-adenylylspectinomycin + diphosphate</text>
        <dbReference type="Rhea" id="RHEA:63228"/>
        <dbReference type="ChEBI" id="CHEBI:30616"/>
        <dbReference type="ChEBI" id="CHEBI:33019"/>
        <dbReference type="ChEBI" id="CHEBI:146260"/>
        <dbReference type="ChEBI" id="CHEBI:146261"/>
    </reaction>
</comment>
<reference key="1">
    <citation type="journal article" date="1986" name="Plasmid">
        <title>Characterization of transferable plasmids from Shigella flexneri 2a that confer resistance to trimethoprim, streptomycin, and sulfonamides.</title>
        <authorList>
            <person name="Chinault A.C."/>
            <person name="Blakesley V.A."/>
            <person name="Roessler E."/>
            <person name="Willis D.G."/>
            <person name="Smith C.A."/>
            <person name="Cook R.G."/>
            <person name="Fenwick R.G. Jr."/>
        </authorList>
    </citation>
    <scope>NUCLEOTIDE SEQUENCE [GENOMIC DNA]</scope>
    <scope>PROTEIN SEQUENCE OF 1-10</scope>
    <scope>FUNCTION IN SPECTINOMYCIN AND STREPTOMYCIN RESISTANCE</scope>
    <scope>CATALYTIC ACTIVITY</scope>
    <source>
        <strain>Serotype 2a</strain>
    </source>
</reference>
<proteinExistence type="evidence at protein level"/>
<keyword id="KW-0046">Antibiotic resistance</keyword>
<keyword id="KW-0067">ATP-binding</keyword>
<keyword id="KW-0903">Direct protein sequencing</keyword>
<keyword id="KW-0547">Nucleotide-binding</keyword>
<keyword id="KW-0548">Nucleotidyltransferase</keyword>
<keyword id="KW-0614">Plasmid</keyword>
<keyword id="KW-0808">Transferase</keyword>